<protein>
    <recommendedName>
        <fullName>Carnitine operon protein CaiE</fullName>
    </recommendedName>
</protein>
<evidence type="ECO:0000256" key="1">
    <source>
        <dbReference type="SAM" id="MobiDB-lite"/>
    </source>
</evidence>
<evidence type="ECO:0000269" key="2">
    <source>
    </source>
</evidence>
<evidence type="ECO:0000305" key="3"/>
<organism>
    <name type="scientific">Escherichia coli (strain K12)</name>
    <dbReference type="NCBI Taxonomy" id="83333"/>
    <lineage>
        <taxon>Bacteria</taxon>
        <taxon>Pseudomonadati</taxon>
        <taxon>Pseudomonadota</taxon>
        <taxon>Gammaproteobacteria</taxon>
        <taxon>Enterobacterales</taxon>
        <taxon>Enterobacteriaceae</taxon>
        <taxon>Escherichia</taxon>
    </lineage>
</organism>
<accession>P39206</accession>
<accession>Q8KMY1</accession>
<comment type="function">
    <text evidence="2">Overproduction of CaiE stimulates the activity of CaiB and CaiD.</text>
</comment>
<comment type="pathway">
    <text>Amine and polyamine metabolism; carnitine metabolism.</text>
</comment>
<comment type="similarity">
    <text evidence="3">Belongs to the transferase hexapeptide repeat family.</text>
</comment>
<comment type="sequence caution" evidence="3">
    <conflict type="erroneous initiation">
        <sequence resource="EMBL-CDS" id="CAA52115"/>
    </conflict>
    <text>Extended N-terminus.</text>
</comment>
<gene>
    <name type="primary">caiE</name>
    <name type="ordered locus">b0035</name>
    <name type="ordered locus">JW5004</name>
</gene>
<proteinExistence type="inferred from homology"/>
<reference key="1">
    <citation type="journal article" date="1994" name="Mol. Microbiol.">
        <title>Molecular characterization of the cai operon necessary for carnitine metabolism in Escherichia coli.</title>
        <authorList>
            <person name="Eichler K."/>
            <person name="Bourgis F."/>
            <person name="Buchet A."/>
            <person name="Kleber H.-P."/>
            <person name="Mandrand-Berthelot M.-A."/>
        </authorList>
    </citation>
    <scope>NUCLEOTIDE SEQUENCE [GENOMIC DNA]</scope>
    <scope>FUNCTION</scope>
    <source>
        <strain>O44:K74</strain>
    </source>
</reference>
<reference key="2">
    <citation type="journal article" date="1992" name="Nucleic Acids Res.">
        <title>Systematic sequencing of the Escherichia coli genome: analysis of the 0-2.4 min region.</title>
        <authorList>
            <person name="Yura T."/>
            <person name="Mori H."/>
            <person name="Nagai H."/>
            <person name="Nagata T."/>
            <person name="Ishihama A."/>
            <person name="Fujita N."/>
            <person name="Isono K."/>
            <person name="Mizobuchi K."/>
            <person name="Nakata A."/>
        </authorList>
    </citation>
    <scope>NUCLEOTIDE SEQUENCE [LARGE SCALE GENOMIC DNA]</scope>
    <source>
        <strain>K12</strain>
    </source>
</reference>
<reference key="3">
    <citation type="journal article" date="1997" name="Science">
        <title>The complete genome sequence of Escherichia coli K-12.</title>
        <authorList>
            <person name="Blattner F.R."/>
            <person name="Plunkett G. III"/>
            <person name="Bloch C.A."/>
            <person name="Perna N.T."/>
            <person name="Burland V."/>
            <person name="Riley M."/>
            <person name="Collado-Vides J."/>
            <person name="Glasner J.D."/>
            <person name="Rode C.K."/>
            <person name="Mayhew G.F."/>
            <person name="Gregor J."/>
            <person name="Davis N.W."/>
            <person name="Kirkpatrick H.A."/>
            <person name="Goeden M.A."/>
            <person name="Rose D.J."/>
            <person name="Mau B."/>
            <person name="Shao Y."/>
        </authorList>
    </citation>
    <scope>NUCLEOTIDE SEQUENCE [LARGE SCALE GENOMIC DNA]</scope>
    <source>
        <strain>K12 / MG1655 / ATCC 47076</strain>
    </source>
</reference>
<reference key="4">
    <citation type="journal article" date="2006" name="Mol. Syst. Biol.">
        <title>Highly accurate genome sequences of Escherichia coli K-12 strains MG1655 and W3110.</title>
        <authorList>
            <person name="Hayashi K."/>
            <person name="Morooka N."/>
            <person name="Yamamoto Y."/>
            <person name="Fujita K."/>
            <person name="Isono K."/>
            <person name="Choi S."/>
            <person name="Ohtsubo E."/>
            <person name="Baba T."/>
            <person name="Wanner B.L."/>
            <person name="Mori H."/>
            <person name="Horiuchi T."/>
        </authorList>
    </citation>
    <scope>NUCLEOTIDE SEQUENCE [LARGE SCALE GENOMIC DNA]</scope>
    <source>
        <strain>K12 / W3110 / ATCC 27325 / DSM 5911</strain>
    </source>
</reference>
<dbReference type="EMBL" id="X73904">
    <property type="protein sequence ID" value="CAA52115.1"/>
    <property type="status" value="ALT_INIT"/>
    <property type="molecule type" value="Genomic_DNA"/>
</dbReference>
<dbReference type="EMBL" id="U00096">
    <property type="protein sequence ID" value="AAC73146.2"/>
    <property type="molecule type" value="Genomic_DNA"/>
</dbReference>
<dbReference type="EMBL" id="AP009048">
    <property type="protein sequence ID" value="BAB96604.2"/>
    <property type="molecule type" value="Genomic_DNA"/>
</dbReference>
<dbReference type="PIR" id="C64724">
    <property type="entry name" value="C64724"/>
</dbReference>
<dbReference type="RefSeq" id="NP_414577.2">
    <property type="nucleotide sequence ID" value="NC_000913.3"/>
</dbReference>
<dbReference type="RefSeq" id="WP_000122871.1">
    <property type="nucleotide sequence ID" value="NZ_LN832404.1"/>
</dbReference>
<dbReference type="SMR" id="P39206"/>
<dbReference type="BioGRID" id="4261465">
    <property type="interactions" value="172"/>
</dbReference>
<dbReference type="FunCoup" id="P39206">
    <property type="interactions" value="170"/>
</dbReference>
<dbReference type="STRING" id="511145.b0035"/>
<dbReference type="PaxDb" id="511145-b0035"/>
<dbReference type="EnsemblBacteria" id="AAC73146">
    <property type="protein sequence ID" value="AAC73146"/>
    <property type="gene ID" value="b0035"/>
</dbReference>
<dbReference type="GeneID" id="948999"/>
<dbReference type="KEGG" id="ecj:JW5004"/>
<dbReference type="KEGG" id="eco:b0035"/>
<dbReference type="KEGG" id="ecoc:C3026_00185"/>
<dbReference type="PATRIC" id="fig|1411691.4.peg.2248"/>
<dbReference type="EchoBASE" id="EB2492"/>
<dbReference type="eggNOG" id="COG0663">
    <property type="taxonomic scope" value="Bacteria"/>
</dbReference>
<dbReference type="HOGENOM" id="CLU_064827_4_2_6"/>
<dbReference type="InParanoid" id="P39206"/>
<dbReference type="OMA" id="MPCYRLD"/>
<dbReference type="OrthoDB" id="9803036at2"/>
<dbReference type="PhylomeDB" id="P39206"/>
<dbReference type="BioCyc" id="EcoCyc:CAIE-MONOMER"/>
<dbReference type="BioCyc" id="MetaCyc:CAIE-MONOMER"/>
<dbReference type="UniPathway" id="UPA00117"/>
<dbReference type="PRO" id="PR:P39206"/>
<dbReference type="Proteomes" id="UP000000625">
    <property type="component" value="Chromosome"/>
</dbReference>
<dbReference type="GO" id="GO:0016740">
    <property type="term" value="F:transferase activity"/>
    <property type="evidence" value="ECO:0007669"/>
    <property type="project" value="UniProtKB-KW"/>
</dbReference>
<dbReference type="GO" id="GO:0009437">
    <property type="term" value="P:carnitine metabolic process"/>
    <property type="evidence" value="ECO:0000315"/>
    <property type="project" value="EcoCyc"/>
</dbReference>
<dbReference type="CDD" id="cd04745">
    <property type="entry name" value="LbH_paaY_like"/>
    <property type="match status" value="1"/>
</dbReference>
<dbReference type="FunFam" id="2.160.10.10:FF:000012">
    <property type="entry name" value="Carnitine operon protein CaiE"/>
    <property type="match status" value="1"/>
</dbReference>
<dbReference type="Gene3D" id="2.160.10.10">
    <property type="entry name" value="Hexapeptide repeat proteins"/>
    <property type="match status" value="1"/>
</dbReference>
<dbReference type="HAMAP" id="MF_01525">
    <property type="entry name" value="CaiE"/>
    <property type="match status" value="1"/>
</dbReference>
<dbReference type="InterPro" id="IPR023446">
    <property type="entry name" value="CaiE"/>
</dbReference>
<dbReference type="InterPro" id="IPR001451">
    <property type="entry name" value="Hexapep"/>
</dbReference>
<dbReference type="InterPro" id="IPR050484">
    <property type="entry name" value="Transf_Hexapept/Carb_Anhydrase"/>
</dbReference>
<dbReference type="InterPro" id="IPR011004">
    <property type="entry name" value="Trimer_LpxA-like_sf"/>
</dbReference>
<dbReference type="NCBIfam" id="NF010150">
    <property type="entry name" value="PRK13627.1"/>
    <property type="match status" value="1"/>
</dbReference>
<dbReference type="PANTHER" id="PTHR13061">
    <property type="entry name" value="DYNACTIN SUBUNIT P25"/>
    <property type="match status" value="1"/>
</dbReference>
<dbReference type="PANTHER" id="PTHR13061:SF29">
    <property type="entry name" value="GAMMA CARBONIC ANHYDRASE-LIKE 1, MITOCHONDRIAL-RELATED"/>
    <property type="match status" value="1"/>
</dbReference>
<dbReference type="Pfam" id="PF00132">
    <property type="entry name" value="Hexapep"/>
    <property type="match status" value="1"/>
</dbReference>
<dbReference type="SUPFAM" id="SSF51161">
    <property type="entry name" value="Trimeric LpxA-like enzymes"/>
    <property type="match status" value="1"/>
</dbReference>
<keyword id="KW-1185">Reference proteome</keyword>
<keyword id="KW-0677">Repeat</keyword>
<keyword id="KW-0808">Transferase</keyword>
<name>CAIE_ECOLI</name>
<sequence>MSYYAFEGLIPVVHPTAFVHPSAVLIGDVIVGAGVYIGPLASLRGDYGRLIVQAGANIQDGCIMHGYCDTDTIVGENGHIGHGAILHGCLIGRDALVGMNSVIMDGAVIGEESIVAAMSFVKAGFRGEKRQLLMGTPARAVRNVSDDELHWKRLNTKEYQDLVGRCHVSLHETQPLRQMEENRPRLQGTTDVTPKR</sequence>
<feature type="chain" id="PRO_0000068719" description="Carnitine operon protein CaiE">
    <location>
        <begin position="1"/>
        <end position="196"/>
    </location>
</feature>
<feature type="region of interest" description="Disordered" evidence="1">
    <location>
        <begin position="174"/>
        <end position="196"/>
    </location>
</feature>
<feature type="compositionally biased region" description="Polar residues" evidence="1">
    <location>
        <begin position="187"/>
        <end position="196"/>
    </location>
</feature>
<feature type="sequence variant" description="In strain: O44:K74.">
    <original>A</original>
    <variation>T</variation>
    <location>
        <position position="54"/>
    </location>
</feature>
<feature type="sequence variant" description="In strain: O44:K74.">
    <original>L</original>
    <variation>V</variation>
    <location>
        <position position="90"/>
    </location>
</feature>
<feature type="sequence variant" description="In strain: O44:K74.">
    <original>R</original>
    <variation>H</variation>
    <location>
        <position position="126"/>
    </location>
</feature>
<feature type="sequence variant" description="In strain: O44:K74.">
    <original>N</original>
    <variation>S</variation>
    <location>
        <position position="143"/>
    </location>
</feature>
<feature type="sequence variant" description="In strain: O44:K74.">
    <original>R</original>
    <variation>Q</variation>
    <location>
        <position position="153"/>
    </location>
</feature>
<feature type="sequence variant" description="In strain: O44:K74.">
    <original>V</original>
    <variation>A</variation>
    <location>
        <position position="168"/>
    </location>
</feature>